<gene>
    <name type="primary">acyP</name>
    <name type="ordered locus">TTE1765</name>
</gene>
<comment type="catalytic activity">
    <reaction>
        <text>an acyl phosphate + H2O = a carboxylate + phosphate + H(+)</text>
        <dbReference type="Rhea" id="RHEA:14965"/>
        <dbReference type="ChEBI" id="CHEBI:15377"/>
        <dbReference type="ChEBI" id="CHEBI:15378"/>
        <dbReference type="ChEBI" id="CHEBI:29067"/>
        <dbReference type="ChEBI" id="CHEBI:43474"/>
        <dbReference type="ChEBI" id="CHEBI:59918"/>
        <dbReference type="EC" id="3.6.1.7"/>
    </reaction>
</comment>
<comment type="similarity">
    <text evidence="2">Belongs to the acylphosphatase family.</text>
</comment>
<name>ACYP_CALS4</name>
<dbReference type="EC" id="3.6.1.7"/>
<dbReference type="EMBL" id="AE008691">
    <property type="protein sequence ID" value="AAM24959.1"/>
    <property type="molecule type" value="Genomic_DNA"/>
</dbReference>
<dbReference type="RefSeq" id="WP_011025961.1">
    <property type="nucleotide sequence ID" value="NC_003869.1"/>
</dbReference>
<dbReference type="SMR" id="Q8R961"/>
<dbReference type="STRING" id="273068.TTE1765"/>
<dbReference type="KEGG" id="tte:TTE1765"/>
<dbReference type="eggNOG" id="COG1254">
    <property type="taxonomic scope" value="Bacteria"/>
</dbReference>
<dbReference type="HOGENOM" id="CLU_141932_3_2_9"/>
<dbReference type="OrthoDB" id="9808093at2"/>
<dbReference type="Proteomes" id="UP000000555">
    <property type="component" value="Chromosome"/>
</dbReference>
<dbReference type="GO" id="GO:0003998">
    <property type="term" value="F:acylphosphatase activity"/>
    <property type="evidence" value="ECO:0007669"/>
    <property type="project" value="UniProtKB-EC"/>
</dbReference>
<dbReference type="Gene3D" id="3.30.70.100">
    <property type="match status" value="1"/>
</dbReference>
<dbReference type="InterPro" id="IPR020456">
    <property type="entry name" value="Acylphosphatase"/>
</dbReference>
<dbReference type="InterPro" id="IPR001792">
    <property type="entry name" value="Acylphosphatase-like_dom"/>
</dbReference>
<dbReference type="InterPro" id="IPR036046">
    <property type="entry name" value="Acylphosphatase-like_dom_sf"/>
</dbReference>
<dbReference type="NCBIfam" id="NF011000">
    <property type="entry name" value="PRK14426.1"/>
    <property type="match status" value="1"/>
</dbReference>
<dbReference type="NCBIfam" id="NF011020">
    <property type="entry name" value="PRK14449.1"/>
    <property type="match status" value="1"/>
</dbReference>
<dbReference type="PANTHER" id="PTHR47268">
    <property type="entry name" value="ACYLPHOSPHATASE"/>
    <property type="match status" value="1"/>
</dbReference>
<dbReference type="PANTHER" id="PTHR47268:SF4">
    <property type="entry name" value="ACYLPHOSPHATASE"/>
    <property type="match status" value="1"/>
</dbReference>
<dbReference type="Pfam" id="PF00708">
    <property type="entry name" value="Acylphosphatase"/>
    <property type="match status" value="1"/>
</dbReference>
<dbReference type="SUPFAM" id="SSF54975">
    <property type="entry name" value="Acylphosphatase/BLUF domain-like"/>
    <property type="match status" value="1"/>
</dbReference>
<dbReference type="PROSITE" id="PS51160">
    <property type="entry name" value="ACYLPHOSPHATASE_3"/>
    <property type="match status" value="1"/>
</dbReference>
<accession>Q8R961</accession>
<evidence type="ECO:0000255" key="1">
    <source>
        <dbReference type="PROSITE-ProRule" id="PRU00520"/>
    </source>
</evidence>
<evidence type="ECO:0000305" key="2"/>
<proteinExistence type="inferred from homology"/>
<feature type="chain" id="PRO_0000326830" description="Acylphosphatase">
    <location>
        <begin position="1"/>
        <end position="90"/>
    </location>
</feature>
<feature type="domain" description="Acylphosphatase-like" evidence="1">
    <location>
        <begin position="4"/>
        <end position="90"/>
    </location>
</feature>
<feature type="active site" evidence="1">
    <location>
        <position position="19"/>
    </location>
</feature>
<feature type="active site" evidence="1">
    <location>
        <position position="37"/>
    </location>
</feature>
<reference key="1">
    <citation type="journal article" date="2002" name="Genome Res.">
        <title>A complete sequence of the T. tengcongensis genome.</title>
        <authorList>
            <person name="Bao Q."/>
            <person name="Tian Y."/>
            <person name="Li W."/>
            <person name="Xu Z."/>
            <person name="Xuan Z."/>
            <person name="Hu S."/>
            <person name="Dong W."/>
            <person name="Yang J."/>
            <person name="Chen Y."/>
            <person name="Xue Y."/>
            <person name="Xu Y."/>
            <person name="Lai X."/>
            <person name="Huang L."/>
            <person name="Dong X."/>
            <person name="Ma Y."/>
            <person name="Ling L."/>
            <person name="Tan H."/>
            <person name="Chen R."/>
            <person name="Wang J."/>
            <person name="Yu J."/>
            <person name="Yang H."/>
        </authorList>
    </citation>
    <scope>NUCLEOTIDE SEQUENCE [LARGE SCALE GENOMIC DNA]</scope>
    <source>
        <strain>DSM 15242 / JCM 11007 / NBRC 100824 / MB4</strain>
    </source>
</reference>
<keyword id="KW-0378">Hydrolase</keyword>
<keyword id="KW-1185">Reference proteome</keyword>
<organism>
    <name type="scientific">Caldanaerobacter subterraneus subsp. tengcongensis (strain DSM 15242 / JCM 11007 / NBRC 100824 / MB4)</name>
    <name type="common">Thermoanaerobacter tengcongensis</name>
    <dbReference type="NCBI Taxonomy" id="273068"/>
    <lineage>
        <taxon>Bacteria</taxon>
        <taxon>Bacillati</taxon>
        <taxon>Bacillota</taxon>
        <taxon>Clostridia</taxon>
        <taxon>Thermoanaerobacterales</taxon>
        <taxon>Thermoanaerobacteraceae</taxon>
        <taxon>Caldanaerobacter</taxon>
    </lineage>
</organism>
<protein>
    <recommendedName>
        <fullName>Acylphosphatase</fullName>
        <ecNumber>3.6.1.7</ecNumber>
    </recommendedName>
    <alternativeName>
        <fullName>Acylphosphate phosphohydrolase</fullName>
    </alternativeName>
</protein>
<sequence length="90" mass="10454">MKKTVHLRITGHVQGVGLRYSVYQKATSLGITGYAENLYDGSVEVVAEGDEESIKELIHFIKTGLRWARVDNVEERWLEYKGQYKDFRIY</sequence>